<reference key="1">
    <citation type="submission" date="2007-03" db="EMBL/GenBank/DDBJ databases">
        <title>The NIAID influenza genome sequencing project.</title>
        <authorList>
            <person name="Ghedin E."/>
            <person name="Spiro D."/>
            <person name="Miller N."/>
            <person name="Zaborsky J."/>
            <person name="Feldblyum T."/>
            <person name="Subbu V."/>
            <person name="Shumway M."/>
            <person name="Sparenborg J."/>
            <person name="Groveman L."/>
            <person name="Halpin R."/>
            <person name="Sitz J."/>
            <person name="Koo H."/>
            <person name="Salzberg S.L."/>
            <person name="Webster R.G."/>
            <person name="Hoffmann E."/>
            <person name="Krauss S."/>
            <person name="Naeve C."/>
            <person name="Bao Y."/>
            <person name="Bolotov P."/>
            <person name="Dernovoy D."/>
            <person name="Kiryutin B."/>
            <person name="Lipman D.J."/>
            <person name="Tatusova T."/>
        </authorList>
    </citation>
    <scope>NUCLEOTIDE SEQUENCE [GENOMIC RNA]</scope>
</reference>
<reference key="2">
    <citation type="submission" date="2007-03" db="EMBL/GenBank/DDBJ databases">
        <authorList>
            <consortium name="The NIAID Influenza Genome Sequencing Consortium"/>
        </authorList>
    </citation>
    <scope>NUCLEOTIDE SEQUENCE [GENOMIC RNA]</scope>
</reference>
<organism>
    <name type="scientific">Influenza A virus (strain A/Henry/1936 H1N1)</name>
    <dbReference type="NCBI Taxonomy" id="425562"/>
    <lineage>
        <taxon>Viruses</taxon>
        <taxon>Riboviria</taxon>
        <taxon>Orthornavirae</taxon>
        <taxon>Negarnaviricota</taxon>
        <taxon>Polyploviricotina</taxon>
        <taxon>Insthoviricetes</taxon>
        <taxon>Articulavirales</taxon>
        <taxon>Orthomyxoviridae</taxon>
        <taxon>Alphainfluenzavirus</taxon>
        <taxon>Alphainfluenzavirus influenzae</taxon>
        <taxon>Influenza A virus</taxon>
    </lineage>
</organism>
<organismHost>
    <name type="scientific">Aves</name>
    <dbReference type="NCBI Taxonomy" id="8782"/>
</organismHost>
<organismHost>
    <name type="scientific">Homo sapiens</name>
    <name type="common">Human</name>
    <dbReference type="NCBI Taxonomy" id="9606"/>
</organismHost>
<organismHost>
    <name type="scientific">Sus scrofa</name>
    <name type="common">Pig</name>
    <dbReference type="NCBI Taxonomy" id="9823"/>
</organismHost>
<comment type="function">
    <text evidence="2">Binds to sialic acid-containing receptors on the cell surface, bringing about the attachment of the virus particle to the cell. This attachment induces virion internalization either through clathrin-dependent endocytosis or through clathrin- and caveolin-independent pathway. Plays a major role in the determination of host range restriction and virulence. Class I viral fusion protein. Responsible for penetration of the virus into the cell cytoplasm by mediating the fusion of the membrane of the endocytosed virus particle with the endosomal membrane. Low pH in endosomes induces an irreversible conformational change in HA2, releasing the fusion hydrophobic peptide. Several trimers are required to form a competent fusion pore.</text>
</comment>
<comment type="subunit">
    <text evidence="1">Homotrimer of disulfide-linked HA1-HA2. Interacts with human CACNA1C.</text>
</comment>
<comment type="subcellular location">
    <subcellularLocation>
        <location evidence="2">Virion membrane</location>
        <topology evidence="2">Single-pass type I membrane protein</topology>
    </subcellularLocation>
    <subcellularLocation>
        <location evidence="2">Host apical cell membrane</location>
        <topology evidence="2">Single-pass type I membrane protein</topology>
    </subcellularLocation>
    <text evidence="2">Targeted to the apical plasma membrane in epithelial polarized cells through a signal present in the transmembrane domain. Associated with glycosphingolipid- and cholesterol-enriched detergent-resistant lipid rafts.</text>
</comment>
<comment type="PTM">
    <text evidence="2">Palmitoylated.</text>
</comment>
<comment type="PTM">
    <text evidence="2">In natural infection, inactive HA is matured into HA1 and HA2 outside the cell by one or more trypsin-like, arginine-specific endoprotease secreted by the bronchial epithelial cells. One identified protease that may be involved in this process is secreted in lungs by club cells.</text>
</comment>
<comment type="miscellaneous">
    <text>Major glycoprotein, comprises over 80% of the envelope proteins present in virus particle.</text>
</comment>
<comment type="miscellaneous">
    <text>The extent of infection into host organism is determined by HA. Influenza viruses bud from the apical surface of polarized epithelial cells (e.g. bronchial epithelial cells) into lumen of lungs and are therefore usually pneumotropic. The reason is that HA is cleaved by tryptase clara which is restricted to lungs. However, HAs of H5 and H7 pantropic avian viruses subtypes can be cleaved by furin and subtilisin-type enzymes, allowing the virus to grow in other organs than lungs.</text>
</comment>
<comment type="miscellaneous">
    <text evidence="3">The influenza A genome consist of 8 RNA segments. Genetic variation of hemagglutinin and/or neuraminidase genes results in the emergence of new influenza strains. The mechanism of variation can be the result of point mutations or the result of genetic reassortment between segments of two different strains.</text>
</comment>
<comment type="similarity">
    <text evidence="2">Belongs to the influenza viruses hemagglutinin family.</text>
</comment>
<feature type="signal peptide" evidence="2">
    <location>
        <begin position="1"/>
        <end position="17"/>
    </location>
</feature>
<feature type="chain" id="PRO_0000440379" description="Hemagglutinin" evidence="2">
    <location>
        <begin position="18"/>
        <end position="566"/>
    </location>
</feature>
<feature type="chain" id="PRO_0000372875" description="Hemagglutinin HA1 chain" evidence="2">
    <location>
        <begin position="18"/>
        <end position="343"/>
    </location>
</feature>
<feature type="chain" id="PRO_0000372876" description="Hemagglutinin HA2 chain" evidence="2">
    <location>
        <begin position="345"/>
        <end position="566"/>
    </location>
</feature>
<feature type="topological domain" description="Extracellular" evidence="2">
    <location>
        <begin position="18"/>
        <end position="529"/>
    </location>
</feature>
<feature type="transmembrane region" description="Helical" evidence="2">
    <location>
        <begin position="530"/>
        <end position="550"/>
    </location>
</feature>
<feature type="topological domain" description="Cytoplasmic" evidence="2">
    <location>
        <begin position="551"/>
        <end position="566"/>
    </location>
</feature>
<feature type="site" description="Cleavage; by host" evidence="2">
    <location>
        <begin position="344"/>
        <end position="345"/>
    </location>
</feature>
<feature type="lipid moiety-binding region" description="S-palmitoyl cysteine; by host" evidence="2">
    <location>
        <position position="555"/>
    </location>
</feature>
<feature type="lipid moiety-binding region" description="S-palmitoyl cysteine; by host" evidence="2">
    <location>
        <position position="562"/>
    </location>
</feature>
<feature type="lipid moiety-binding region" description="S-palmitoyl cysteine; by host" evidence="2">
    <location>
        <position position="565"/>
    </location>
</feature>
<feature type="glycosylation site" description="N-linked (GlcNAc...) asparagine; by host" evidence="2">
    <location>
        <position position="27"/>
    </location>
</feature>
<feature type="glycosylation site" description="N-linked (GlcNAc...) asparagine; by host" evidence="2">
    <location>
        <position position="28"/>
    </location>
</feature>
<feature type="glycosylation site" description="N-linked (GlcNAc...) asparagine; by host" evidence="2">
    <location>
        <position position="40"/>
    </location>
</feature>
<feature type="glycosylation site" description="N-linked (GlcNAc...) asparagine; by host" evidence="2">
    <location>
        <position position="286"/>
    </location>
</feature>
<feature type="glycosylation site" description="N-linked (GlcNAc...) asparagine; by host" evidence="2">
    <location>
        <position position="304"/>
    </location>
</feature>
<feature type="glycosylation site" description="N-linked (GlcNAc...) asparagine; by host" evidence="2">
    <location>
        <position position="498"/>
    </location>
</feature>
<feature type="disulfide bond" description="Interchain (between HA1 and HA2 chains)" evidence="2">
    <location>
        <begin position="21"/>
        <end position="481"/>
    </location>
</feature>
<feature type="disulfide bond" evidence="2">
    <location>
        <begin position="59"/>
        <end position="292"/>
    </location>
</feature>
<feature type="disulfide bond" evidence="2">
    <location>
        <begin position="72"/>
        <end position="84"/>
    </location>
</feature>
<feature type="disulfide bond" evidence="2">
    <location>
        <begin position="107"/>
        <end position="153"/>
    </location>
</feature>
<feature type="disulfide bond" evidence="2">
    <location>
        <begin position="296"/>
        <end position="320"/>
    </location>
</feature>
<feature type="disulfide bond" evidence="2">
    <location>
        <begin position="488"/>
        <end position="492"/>
    </location>
</feature>
<name>HEMA_I36A0</name>
<evidence type="ECO:0000250" key="1">
    <source>
        <dbReference type="UniProtKB" id="Q289M7"/>
    </source>
</evidence>
<evidence type="ECO:0000255" key="2">
    <source>
        <dbReference type="HAMAP-Rule" id="MF_04072"/>
    </source>
</evidence>
<evidence type="ECO:0000305" key="3"/>
<accession>A4GCI6</accession>
<gene>
    <name evidence="2" type="primary">HA</name>
</gene>
<sequence>MKARLLVLLCALAATDADTICIGYHANNSTDTVDTVLEKNVTVTHSVNLLEDSHNGKLCRLKGIAPLQLGKCNIAGWLLGNPECDPLLPARSWSYIVETPNSENGICYPGAFIDYEELREQLSSVSSFERFEIFPKESSWPNHNTNIGVTAACSHAGKSSFYRNLLWLTKKGGSYPKLKNSYVNKKGKEVLVLWGIHHPSNSKDQQTLYQNENAYVSVVSSNYNRRFTPEIAERPEVRDQAGRMNYYWTLLEPGDTIMFEANGNLVAPWYAFALSRGFGSGIITSNASMHECNTKCQTPQGAINSSLPFQNIHPVTIGECPKYVRSAKLRMVTGLRNIPSIQSRGLFGAIAGFIEGGWTGMIDGWYGYHHQNEQGSGYAADQKSTQNAINGITNKVNSVIEKMNTQFTAVGKEFNNLEKRMENLNKKVDDGFLDIWTYNAELLVLLENERTLDFHDSNVKNLYEKVKSQLKNNAKEIGNGCFEFYHKCDNECMESVRNGTYDYPKYSEESKLNREKIDGVKLESMGVYQILAIYSTVASSLVLLVSLGAISFWMCSNGSLQCRICI</sequence>
<keyword id="KW-1167">Clathrin- and caveolin-independent endocytosis of virus by host</keyword>
<keyword id="KW-1165">Clathrin-mediated endocytosis of virus by host</keyword>
<keyword id="KW-1015">Disulfide bond</keyword>
<keyword id="KW-1170">Fusion of virus membrane with host endosomal membrane</keyword>
<keyword id="KW-1168">Fusion of virus membrane with host membrane</keyword>
<keyword id="KW-0325">Glycoprotein</keyword>
<keyword id="KW-0348">Hemagglutinin</keyword>
<keyword id="KW-1032">Host cell membrane</keyword>
<keyword id="KW-1043">Host membrane</keyword>
<keyword id="KW-0945">Host-virus interaction</keyword>
<keyword id="KW-0449">Lipoprotein</keyword>
<keyword id="KW-0472">Membrane</keyword>
<keyword id="KW-0564">Palmitate</keyword>
<keyword id="KW-0732">Signal</keyword>
<keyword id="KW-0812">Transmembrane</keyword>
<keyword id="KW-1133">Transmembrane helix</keyword>
<keyword id="KW-1161">Viral attachment to host cell</keyword>
<keyword id="KW-0261">Viral envelope protein</keyword>
<keyword id="KW-1162">Viral penetration into host cytoplasm</keyword>
<keyword id="KW-0946">Virion</keyword>
<keyword id="KW-1164">Virus endocytosis by host</keyword>
<keyword id="KW-1160">Virus entry into host cell</keyword>
<protein>
    <recommendedName>
        <fullName evidence="2">Hemagglutinin</fullName>
    </recommendedName>
    <component>
        <recommendedName>
            <fullName evidence="2">Hemagglutinin HA1 chain</fullName>
        </recommendedName>
    </component>
    <component>
        <recommendedName>
            <fullName evidence="2">Hemagglutinin HA2 chain</fullName>
        </recommendedName>
    </component>
</protein>
<proteinExistence type="inferred from homology"/>
<dbReference type="EMBL" id="CY020445">
    <property type="protein sequence ID" value="ABO38351.1"/>
    <property type="molecule type" value="Viral_cRNA"/>
</dbReference>
<dbReference type="BMRB" id="A4GCI6"/>
<dbReference type="SMR" id="A4GCI6"/>
<dbReference type="GlyCosmos" id="A4GCI6">
    <property type="glycosylation" value="6 sites, No reported glycans"/>
</dbReference>
<dbReference type="PRO" id="PR:A4GCI6"/>
<dbReference type="Proteomes" id="UP000008213">
    <property type="component" value="Genome"/>
</dbReference>
<dbReference type="GO" id="GO:0020002">
    <property type="term" value="C:host cell plasma membrane"/>
    <property type="evidence" value="ECO:0007669"/>
    <property type="project" value="UniProtKB-SubCell"/>
</dbReference>
<dbReference type="GO" id="GO:0016020">
    <property type="term" value="C:membrane"/>
    <property type="evidence" value="ECO:0007669"/>
    <property type="project" value="UniProtKB-UniRule"/>
</dbReference>
<dbReference type="GO" id="GO:0019031">
    <property type="term" value="C:viral envelope"/>
    <property type="evidence" value="ECO:0007669"/>
    <property type="project" value="UniProtKB-UniRule"/>
</dbReference>
<dbReference type="GO" id="GO:0055036">
    <property type="term" value="C:virion membrane"/>
    <property type="evidence" value="ECO:0007669"/>
    <property type="project" value="UniProtKB-SubCell"/>
</dbReference>
<dbReference type="GO" id="GO:0046789">
    <property type="term" value="F:host cell surface receptor binding"/>
    <property type="evidence" value="ECO:0007669"/>
    <property type="project" value="UniProtKB-UniRule"/>
</dbReference>
<dbReference type="GO" id="GO:0075512">
    <property type="term" value="P:clathrin-dependent endocytosis of virus by host cell"/>
    <property type="evidence" value="ECO:0007669"/>
    <property type="project" value="UniProtKB-UniRule"/>
</dbReference>
<dbReference type="GO" id="GO:0039654">
    <property type="term" value="P:fusion of virus membrane with host endosome membrane"/>
    <property type="evidence" value="ECO:0007669"/>
    <property type="project" value="UniProtKB-UniRule"/>
</dbReference>
<dbReference type="GO" id="GO:0019064">
    <property type="term" value="P:fusion of virus membrane with host plasma membrane"/>
    <property type="evidence" value="ECO:0007669"/>
    <property type="project" value="InterPro"/>
</dbReference>
<dbReference type="GO" id="GO:0046761">
    <property type="term" value="P:viral budding from plasma membrane"/>
    <property type="evidence" value="ECO:0007669"/>
    <property type="project" value="UniProtKB-UniRule"/>
</dbReference>
<dbReference type="GO" id="GO:0019062">
    <property type="term" value="P:virion attachment to host cell"/>
    <property type="evidence" value="ECO:0007669"/>
    <property type="project" value="UniProtKB-KW"/>
</dbReference>
<dbReference type="FunFam" id="3.90.20.10:FF:000002">
    <property type="entry name" value="Hemagglutinin"/>
    <property type="match status" value="1"/>
</dbReference>
<dbReference type="Gene3D" id="3.90.20.10">
    <property type="match status" value="1"/>
</dbReference>
<dbReference type="Gene3D" id="3.90.209.20">
    <property type="match status" value="1"/>
</dbReference>
<dbReference type="Gene3D" id="2.10.77.10">
    <property type="entry name" value="Hemagglutinin Chain A, Domain 2"/>
    <property type="match status" value="1"/>
</dbReference>
<dbReference type="HAMAP" id="MF_04072">
    <property type="entry name" value="INFV_HEMA"/>
    <property type="match status" value="1"/>
</dbReference>
<dbReference type="InterPro" id="IPR008980">
    <property type="entry name" value="Capsid_hemagglutn"/>
</dbReference>
<dbReference type="InterPro" id="IPR013828">
    <property type="entry name" value="Hemagglutn_HA1_a/b_dom_sf"/>
</dbReference>
<dbReference type="InterPro" id="IPR000149">
    <property type="entry name" value="Hemagglutn_influenz_A"/>
</dbReference>
<dbReference type="InterPro" id="IPR001364">
    <property type="entry name" value="Hemagglutn_influenz_A/B"/>
</dbReference>
<dbReference type="Pfam" id="PF00509">
    <property type="entry name" value="Hemagglutinin"/>
    <property type="match status" value="1"/>
</dbReference>
<dbReference type="PRINTS" id="PR00330">
    <property type="entry name" value="HEMAGGLUTN1"/>
</dbReference>
<dbReference type="PRINTS" id="PR00329">
    <property type="entry name" value="HEMAGGLUTN12"/>
</dbReference>
<dbReference type="SUPFAM" id="SSF58064">
    <property type="entry name" value="Influenza hemagglutinin (stalk)"/>
    <property type="match status" value="1"/>
</dbReference>
<dbReference type="SUPFAM" id="SSF49818">
    <property type="entry name" value="Viral protein domain"/>
    <property type="match status" value="1"/>
</dbReference>